<dbReference type="EC" id="3.6.1.66" evidence="1"/>
<dbReference type="EMBL" id="AE006641">
    <property type="protein sequence ID" value="AAK40756.1"/>
    <property type="molecule type" value="Genomic_DNA"/>
</dbReference>
<dbReference type="PIR" id="E90187">
    <property type="entry name" value="E90187"/>
</dbReference>
<dbReference type="RefSeq" id="WP_009988745.1">
    <property type="nucleotide sequence ID" value="NC_002754.1"/>
</dbReference>
<dbReference type="SMR" id="Q97ZZ0"/>
<dbReference type="FunCoup" id="Q97ZZ0">
    <property type="interactions" value="240"/>
</dbReference>
<dbReference type="STRING" id="273057.SSO0432"/>
<dbReference type="PaxDb" id="273057-SSO0432"/>
<dbReference type="EnsemblBacteria" id="AAK40756">
    <property type="protein sequence ID" value="AAK40756"/>
    <property type="gene ID" value="SSO0432"/>
</dbReference>
<dbReference type="KEGG" id="sso:SSO0432"/>
<dbReference type="PATRIC" id="fig|273057.12.peg.424"/>
<dbReference type="eggNOG" id="arCOG04184">
    <property type="taxonomic scope" value="Archaea"/>
</dbReference>
<dbReference type="HOGENOM" id="CLU_082080_1_0_2"/>
<dbReference type="InParanoid" id="Q97ZZ0"/>
<dbReference type="PhylomeDB" id="Q97ZZ0"/>
<dbReference type="Proteomes" id="UP000001974">
    <property type="component" value="Chromosome"/>
</dbReference>
<dbReference type="GO" id="GO:0005737">
    <property type="term" value="C:cytoplasm"/>
    <property type="evidence" value="ECO:0000318"/>
    <property type="project" value="GO_Central"/>
</dbReference>
<dbReference type="GO" id="GO:0035870">
    <property type="term" value="F:dITP diphosphatase activity"/>
    <property type="evidence" value="ECO:0007669"/>
    <property type="project" value="RHEA"/>
</dbReference>
<dbReference type="GO" id="GO:0036220">
    <property type="term" value="F:ITP diphosphatase activity"/>
    <property type="evidence" value="ECO:0007669"/>
    <property type="project" value="UniProtKB-EC"/>
</dbReference>
<dbReference type="GO" id="GO:0046872">
    <property type="term" value="F:metal ion binding"/>
    <property type="evidence" value="ECO:0007669"/>
    <property type="project" value="UniProtKB-KW"/>
</dbReference>
<dbReference type="GO" id="GO:0047429">
    <property type="term" value="F:nucleoside triphosphate diphosphatase activity"/>
    <property type="evidence" value="ECO:0000318"/>
    <property type="project" value="GO_Central"/>
</dbReference>
<dbReference type="GO" id="GO:0000166">
    <property type="term" value="F:nucleotide binding"/>
    <property type="evidence" value="ECO:0007669"/>
    <property type="project" value="UniProtKB-KW"/>
</dbReference>
<dbReference type="GO" id="GO:0017111">
    <property type="term" value="F:ribonucleoside triphosphate phosphatase activity"/>
    <property type="evidence" value="ECO:0007669"/>
    <property type="project" value="InterPro"/>
</dbReference>
<dbReference type="GO" id="GO:0036222">
    <property type="term" value="F:XTP diphosphatase activity"/>
    <property type="evidence" value="ECO:0007669"/>
    <property type="project" value="RHEA"/>
</dbReference>
<dbReference type="GO" id="GO:0009143">
    <property type="term" value="P:nucleoside triphosphate catabolic process"/>
    <property type="evidence" value="ECO:0000318"/>
    <property type="project" value="GO_Central"/>
</dbReference>
<dbReference type="GO" id="GO:0009117">
    <property type="term" value="P:nucleotide metabolic process"/>
    <property type="evidence" value="ECO:0007669"/>
    <property type="project" value="UniProtKB-KW"/>
</dbReference>
<dbReference type="GO" id="GO:0009146">
    <property type="term" value="P:purine nucleoside triphosphate catabolic process"/>
    <property type="evidence" value="ECO:0007669"/>
    <property type="project" value="UniProtKB-UniRule"/>
</dbReference>
<dbReference type="CDD" id="cd00515">
    <property type="entry name" value="HAM1"/>
    <property type="match status" value="1"/>
</dbReference>
<dbReference type="FunFam" id="3.90.950.10:FF:000001">
    <property type="entry name" value="dITP/XTP pyrophosphatase"/>
    <property type="match status" value="1"/>
</dbReference>
<dbReference type="Gene3D" id="3.90.950.10">
    <property type="match status" value="1"/>
</dbReference>
<dbReference type="HAMAP" id="MF_01405">
    <property type="entry name" value="Non_canon_purine_NTPase"/>
    <property type="match status" value="1"/>
</dbReference>
<dbReference type="InterPro" id="IPR020922">
    <property type="entry name" value="dITP/XTP_pyrophosphatase"/>
</dbReference>
<dbReference type="InterPro" id="IPR029001">
    <property type="entry name" value="ITPase-like_fam"/>
</dbReference>
<dbReference type="InterPro" id="IPR002637">
    <property type="entry name" value="RdgB/HAM1"/>
</dbReference>
<dbReference type="NCBIfam" id="NF011396">
    <property type="entry name" value="PRK14821.1"/>
    <property type="match status" value="1"/>
</dbReference>
<dbReference type="NCBIfam" id="TIGR00042">
    <property type="entry name" value="RdgB/HAM1 family non-canonical purine NTP pyrophosphatase"/>
    <property type="match status" value="1"/>
</dbReference>
<dbReference type="PANTHER" id="PTHR11067:SF9">
    <property type="entry name" value="INOSINE TRIPHOSPHATE PYROPHOSPHATASE"/>
    <property type="match status" value="1"/>
</dbReference>
<dbReference type="PANTHER" id="PTHR11067">
    <property type="entry name" value="INOSINE TRIPHOSPHATE PYROPHOSPHATASE/HAM1 PROTEIN"/>
    <property type="match status" value="1"/>
</dbReference>
<dbReference type="Pfam" id="PF01725">
    <property type="entry name" value="Ham1p_like"/>
    <property type="match status" value="1"/>
</dbReference>
<dbReference type="SUPFAM" id="SSF52972">
    <property type="entry name" value="ITPase-like"/>
    <property type="match status" value="1"/>
</dbReference>
<name>IXTPA_SACS2</name>
<accession>Q97ZZ0</accession>
<comment type="function">
    <text evidence="1">Pyrophosphatase that catalyzes the hydrolysis of nucleoside triphosphates to their monophosphate derivatives, with a high preference for the non-canonical purine nucleotides XTP (xanthosine triphosphate), dITP (deoxyinosine triphosphate) and ITP. Seems to function as a house-cleaning enzyme that removes non-canonical purine nucleotides from the nucleotide pool, thus preventing their incorporation into DNA/RNA and avoiding chromosomal lesions.</text>
</comment>
<comment type="catalytic activity">
    <reaction evidence="1">
        <text>XTP + H2O = XMP + diphosphate + H(+)</text>
        <dbReference type="Rhea" id="RHEA:28610"/>
        <dbReference type="ChEBI" id="CHEBI:15377"/>
        <dbReference type="ChEBI" id="CHEBI:15378"/>
        <dbReference type="ChEBI" id="CHEBI:33019"/>
        <dbReference type="ChEBI" id="CHEBI:57464"/>
        <dbReference type="ChEBI" id="CHEBI:61314"/>
        <dbReference type="EC" id="3.6.1.66"/>
    </reaction>
</comment>
<comment type="catalytic activity">
    <reaction evidence="1">
        <text>dITP + H2O = dIMP + diphosphate + H(+)</text>
        <dbReference type="Rhea" id="RHEA:28342"/>
        <dbReference type="ChEBI" id="CHEBI:15377"/>
        <dbReference type="ChEBI" id="CHEBI:15378"/>
        <dbReference type="ChEBI" id="CHEBI:33019"/>
        <dbReference type="ChEBI" id="CHEBI:61194"/>
        <dbReference type="ChEBI" id="CHEBI:61382"/>
        <dbReference type="EC" id="3.6.1.66"/>
    </reaction>
</comment>
<comment type="catalytic activity">
    <reaction evidence="1">
        <text>ITP + H2O = IMP + diphosphate + H(+)</text>
        <dbReference type="Rhea" id="RHEA:29399"/>
        <dbReference type="ChEBI" id="CHEBI:15377"/>
        <dbReference type="ChEBI" id="CHEBI:15378"/>
        <dbReference type="ChEBI" id="CHEBI:33019"/>
        <dbReference type="ChEBI" id="CHEBI:58053"/>
        <dbReference type="ChEBI" id="CHEBI:61402"/>
        <dbReference type="EC" id="3.6.1.66"/>
    </reaction>
</comment>
<comment type="cofactor">
    <cofactor evidence="1">
        <name>Mg(2+)</name>
        <dbReference type="ChEBI" id="CHEBI:18420"/>
    </cofactor>
    <text evidence="1">Binds 1 Mg(2+) ion per subunit.</text>
</comment>
<comment type="subunit">
    <text evidence="1">Homodimer.</text>
</comment>
<comment type="similarity">
    <text evidence="1">Belongs to the HAM1 NTPase family.</text>
</comment>
<reference key="1">
    <citation type="journal article" date="2001" name="Proc. Natl. Acad. Sci. U.S.A.">
        <title>The complete genome of the crenarchaeon Sulfolobus solfataricus P2.</title>
        <authorList>
            <person name="She Q."/>
            <person name="Singh R.K."/>
            <person name="Confalonieri F."/>
            <person name="Zivanovic Y."/>
            <person name="Allard G."/>
            <person name="Awayez M.J."/>
            <person name="Chan-Weiher C.C.-Y."/>
            <person name="Clausen I.G."/>
            <person name="Curtis B.A."/>
            <person name="De Moors A."/>
            <person name="Erauso G."/>
            <person name="Fletcher C."/>
            <person name="Gordon P.M.K."/>
            <person name="Heikamp-de Jong I."/>
            <person name="Jeffries A.C."/>
            <person name="Kozera C.J."/>
            <person name="Medina N."/>
            <person name="Peng X."/>
            <person name="Thi-Ngoc H.P."/>
            <person name="Redder P."/>
            <person name="Schenk M.E."/>
            <person name="Theriault C."/>
            <person name="Tolstrup N."/>
            <person name="Charlebois R.L."/>
            <person name="Doolittle W.F."/>
            <person name="Duguet M."/>
            <person name="Gaasterland T."/>
            <person name="Garrett R.A."/>
            <person name="Ragan M.A."/>
            <person name="Sensen C.W."/>
            <person name="Van der Oost J."/>
        </authorList>
    </citation>
    <scope>NUCLEOTIDE SEQUENCE [LARGE SCALE GENOMIC DNA]</scope>
    <source>
        <strain>ATCC 35092 / DSM 1617 / JCM 11322 / P2</strain>
    </source>
</reference>
<protein>
    <recommendedName>
        <fullName evidence="1">dITP/XTP pyrophosphatase</fullName>
        <ecNumber evidence="1">3.6.1.66</ecNumber>
    </recommendedName>
    <alternativeName>
        <fullName evidence="1">Non-canonical purine NTP pyrophosphatase</fullName>
    </alternativeName>
    <alternativeName>
        <fullName evidence="1">Non-standard purine NTP pyrophosphatase</fullName>
    </alternativeName>
    <alternativeName>
        <fullName evidence="1">Nucleoside-triphosphate diphosphatase</fullName>
    </alternativeName>
    <alternativeName>
        <fullName evidence="1">Nucleoside-triphosphate pyrophosphatase</fullName>
        <shortName evidence="1">NTPase</shortName>
    </alternativeName>
</protein>
<keyword id="KW-0378">Hydrolase</keyword>
<keyword id="KW-0460">Magnesium</keyword>
<keyword id="KW-0479">Metal-binding</keyword>
<keyword id="KW-0546">Nucleotide metabolism</keyword>
<keyword id="KW-0547">Nucleotide-binding</keyword>
<keyword id="KW-1185">Reference proteome</keyword>
<proteinExistence type="inferred from homology"/>
<feature type="chain" id="PRO_0000410429" description="dITP/XTP pyrophosphatase">
    <location>
        <begin position="1"/>
        <end position="192"/>
    </location>
</feature>
<feature type="active site" description="Proton acceptor" evidence="1">
    <location>
        <position position="70"/>
    </location>
</feature>
<feature type="binding site" evidence="1">
    <location>
        <begin position="12"/>
        <end position="17"/>
    </location>
    <ligand>
        <name>substrate</name>
    </ligand>
</feature>
<feature type="binding site" evidence="1">
    <location>
        <position position="41"/>
    </location>
    <ligand>
        <name>Mg(2+)</name>
        <dbReference type="ChEBI" id="CHEBI:18420"/>
    </ligand>
</feature>
<feature type="binding site" evidence="1">
    <location>
        <position position="70"/>
    </location>
    <ligand>
        <name>Mg(2+)</name>
        <dbReference type="ChEBI" id="CHEBI:18420"/>
    </ligand>
</feature>
<feature type="binding site" evidence="1">
    <location>
        <position position="71"/>
    </location>
    <ligand>
        <name>substrate</name>
    </ligand>
</feature>
<feature type="binding site" evidence="1">
    <location>
        <begin position="145"/>
        <end position="148"/>
    </location>
    <ligand>
        <name>substrate</name>
    </ligand>
</feature>
<feature type="binding site" evidence="1">
    <location>
        <position position="168"/>
    </location>
    <ligand>
        <name>substrate</name>
    </ligand>
</feature>
<feature type="binding site" evidence="1">
    <location>
        <begin position="173"/>
        <end position="174"/>
    </location>
    <ligand>
        <name>substrate</name>
    </ligand>
</feature>
<gene>
    <name type="ordered locus">SSO0432</name>
</gene>
<organism>
    <name type="scientific">Saccharolobus solfataricus (strain ATCC 35092 / DSM 1617 / JCM 11322 / P2)</name>
    <name type="common">Sulfolobus solfataricus</name>
    <dbReference type="NCBI Taxonomy" id="273057"/>
    <lineage>
        <taxon>Archaea</taxon>
        <taxon>Thermoproteota</taxon>
        <taxon>Thermoprotei</taxon>
        <taxon>Sulfolobales</taxon>
        <taxon>Sulfolobaceae</taxon>
        <taxon>Saccharolobus</taxon>
    </lineage>
</organism>
<evidence type="ECO:0000255" key="1">
    <source>
        <dbReference type="HAMAP-Rule" id="MF_01405"/>
    </source>
</evidence>
<sequence>MLRRGVKIGVLTNNENKFIELKEIAKNFNIELEHLRGEKIEIQSDDLEEISRTAANLAYLIFRRPLIVDDSGLFVQALQNFPGPYTNFVKNTIGLKGILKLLEGIKDRSAYFMTALTFTDGKIIKTFIGIVKGAISEEIRGNLGFGFDPIFIPEGEKRTFAEMSLEEKNRYSHRARAFAKFAEFLESYTEKE</sequence>